<accession>B3CL63</accession>
<reference key="1">
    <citation type="journal article" date="2008" name="Mol. Biol. Evol.">
        <title>Genome evolution of Wolbachia strain wPip from the Culex pipiens group.</title>
        <authorList>
            <person name="Klasson L."/>
            <person name="Walker T."/>
            <person name="Sebaihia M."/>
            <person name="Sanders M.J."/>
            <person name="Quail M.A."/>
            <person name="Lord A."/>
            <person name="Sanders S."/>
            <person name="Earl J."/>
            <person name="O'Neill S.L."/>
            <person name="Thomson N."/>
            <person name="Sinkins S.P."/>
            <person name="Parkhill J."/>
        </authorList>
    </citation>
    <scope>NUCLEOTIDE SEQUENCE [LARGE SCALE GENOMIC DNA]</scope>
    <source>
        <strain>wPip</strain>
    </source>
</reference>
<protein>
    <recommendedName>
        <fullName evidence="1">Holo-[acyl-carrier-protein] synthase</fullName>
        <shortName evidence="1">Holo-ACP synthase</shortName>
        <ecNumber evidence="1">2.7.8.7</ecNumber>
    </recommendedName>
    <alternativeName>
        <fullName evidence="1">4'-phosphopantetheinyl transferase AcpS</fullName>
    </alternativeName>
</protein>
<evidence type="ECO:0000255" key="1">
    <source>
        <dbReference type="HAMAP-Rule" id="MF_00101"/>
    </source>
</evidence>
<sequence length="124" mass="14285">MIYGIGTDIVYIPRILRISQKYGEKFLNKVYTKKEIEISKKYNSQEVRAKYFAKRFAAKEAFVKALGTGFSQGIIMKDIEIYSNIRGKPHLAITKDFISKDYKIHLSLSDDQDYATAFVVICVE</sequence>
<comment type="function">
    <text evidence="1">Transfers the 4'-phosphopantetheine moiety from coenzyme A to a Ser of acyl-carrier-protein.</text>
</comment>
<comment type="catalytic activity">
    <reaction evidence="1">
        <text>apo-[ACP] + CoA = holo-[ACP] + adenosine 3',5'-bisphosphate + H(+)</text>
        <dbReference type="Rhea" id="RHEA:12068"/>
        <dbReference type="Rhea" id="RHEA-COMP:9685"/>
        <dbReference type="Rhea" id="RHEA-COMP:9690"/>
        <dbReference type="ChEBI" id="CHEBI:15378"/>
        <dbReference type="ChEBI" id="CHEBI:29999"/>
        <dbReference type="ChEBI" id="CHEBI:57287"/>
        <dbReference type="ChEBI" id="CHEBI:58343"/>
        <dbReference type="ChEBI" id="CHEBI:64479"/>
        <dbReference type="EC" id="2.7.8.7"/>
    </reaction>
</comment>
<comment type="cofactor">
    <cofactor evidence="1">
        <name>Mg(2+)</name>
        <dbReference type="ChEBI" id="CHEBI:18420"/>
    </cofactor>
</comment>
<comment type="subcellular location">
    <subcellularLocation>
        <location evidence="1">Cytoplasm</location>
    </subcellularLocation>
</comment>
<comment type="similarity">
    <text evidence="1">Belongs to the P-Pant transferase superfamily. AcpS family.</text>
</comment>
<gene>
    <name evidence="1" type="primary">acpS</name>
    <name type="ordered locus">WP0015</name>
</gene>
<organism>
    <name type="scientific">Wolbachia pipientis subsp. Culex pipiens (strain wPip)</name>
    <dbReference type="NCBI Taxonomy" id="570417"/>
    <lineage>
        <taxon>Bacteria</taxon>
        <taxon>Pseudomonadati</taxon>
        <taxon>Pseudomonadota</taxon>
        <taxon>Alphaproteobacteria</taxon>
        <taxon>Rickettsiales</taxon>
        <taxon>Anaplasmataceae</taxon>
        <taxon>Wolbachieae</taxon>
        <taxon>Wolbachia</taxon>
    </lineage>
</organism>
<proteinExistence type="inferred from homology"/>
<keyword id="KW-0963">Cytoplasm</keyword>
<keyword id="KW-0275">Fatty acid biosynthesis</keyword>
<keyword id="KW-0276">Fatty acid metabolism</keyword>
<keyword id="KW-0444">Lipid biosynthesis</keyword>
<keyword id="KW-0443">Lipid metabolism</keyword>
<keyword id="KW-0460">Magnesium</keyword>
<keyword id="KW-0479">Metal-binding</keyword>
<keyword id="KW-0808">Transferase</keyword>
<feature type="chain" id="PRO_1000093929" description="Holo-[acyl-carrier-protein] synthase">
    <location>
        <begin position="1"/>
        <end position="124"/>
    </location>
</feature>
<feature type="binding site" evidence="1">
    <location>
        <position position="8"/>
    </location>
    <ligand>
        <name>Mg(2+)</name>
        <dbReference type="ChEBI" id="CHEBI:18420"/>
    </ligand>
</feature>
<feature type="binding site" evidence="1">
    <location>
        <position position="60"/>
    </location>
    <ligand>
        <name>Mg(2+)</name>
        <dbReference type="ChEBI" id="CHEBI:18420"/>
    </ligand>
</feature>
<name>ACPS_WOLPP</name>
<dbReference type="EC" id="2.7.8.7" evidence="1"/>
<dbReference type="EMBL" id="AM999887">
    <property type="protein sequence ID" value="CAQ54124.1"/>
    <property type="molecule type" value="Genomic_DNA"/>
</dbReference>
<dbReference type="RefSeq" id="WP_007302804.1">
    <property type="nucleotide sequence ID" value="NC_010981.1"/>
</dbReference>
<dbReference type="SMR" id="B3CL63"/>
<dbReference type="KEGG" id="wpi:WP0015"/>
<dbReference type="eggNOG" id="COG0736">
    <property type="taxonomic scope" value="Bacteria"/>
</dbReference>
<dbReference type="HOGENOM" id="CLU_089696_1_2_5"/>
<dbReference type="Proteomes" id="UP000008814">
    <property type="component" value="Chromosome"/>
</dbReference>
<dbReference type="GO" id="GO:0005737">
    <property type="term" value="C:cytoplasm"/>
    <property type="evidence" value="ECO:0007669"/>
    <property type="project" value="UniProtKB-SubCell"/>
</dbReference>
<dbReference type="GO" id="GO:0008897">
    <property type="term" value="F:holo-[acyl-carrier-protein] synthase activity"/>
    <property type="evidence" value="ECO:0007669"/>
    <property type="project" value="UniProtKB-UniRule"/>
</dbReference>
<dbReference type="GO" id="GO:0000287">
    <property type="term" value="F:magnesium ion binding"/>
    <property type="evidence" value="ECO:0007669"/>
    <property type="project" value="UniProtKB-UniRule"/>
</dbReference>
<dbReference type="GO" id="GO:0006633">
    <property type="term" value="P:fatty acid biosynthetic process"/>
    <property type="evidence" value="ECO:0007669"/>
    <property type="project" value="UniProtKB-UniRule"/>
</dbReference>
<dbReference type="Gene3D" id="3.90.470.20">
    <property type="entry name" value="4'-phosphopantetheinyl transferase domain"/>
    <property type="match status" value="1"/>
</dbReference>
<dbReference type="HAMAP" id="MF_00101">
    <property type="entry name" value="AcpS"/>
    <property type="match status" value="1"/>
</dbReference>
<dbReference type="InterPro" id="IPR008278">
    <property type="entry name" value="4-PPantetheinyl_Trfase_dom"/>
</dbReference>
<dbReference type="InterPro" id="IPR037143">
    <property type="entry name" value="4-PPantetheinyl_Trfase_dom_sf"/>
</dbReference>
<dbReference type="InterPro" id="IPR002582">
    <property type="entry name" value="ACPS"/>
</dbReference>
<dbReference type="InterPro" id="IPR004568">
    <property type="entry name" value="Ppantetheine-prot_Trfase_dom"/>
</dbReference>
<dbReference type="NCBIfam" id="TIGR00516">
    <property type="entry name" value="acpS"/>
    <property type="match status" value="1"/>
</dbReference>
<dbReference type="NCBIfam" id="TIGR00556">
    <property type="entry name" value="pantethn_trn"/>
    <property type="match status" value="1"/>
</dbReference>
<dbReference type="NCBIfam" id="NF011253">
    <property type="entry name" value="PRK14659.1"/>
    <property type="match status" value="1"/>
</dbReference>
<dbReference type="Pfam" id="PF01648">
    <property type="entry name" value="ACPS"/>
    <property type="match status" value="1"/>
</dbReference>
<dbReference type="SUPFAM" id="SSF56214">
    <property type="entry name" value="4'-phosphopantetheinyl transferase"/>
    <property type="match status" value="1"/>
</dbReference>